<sequence>MAPKKKGTKKESKKDAVATGDIEGASVEELNQKIGTLEKEKNKEEEYRNYMQLERDKINAFWEITKKDLEDRRAELRNKDREMEEMEERHQVEIKVYKQKVKHLLYEHQNNITTLKSDGELALKLQQDEYRKREGDLGKDKRNLKLELKEQELAHQDIIRQLKLEHAKEITKLRQEFEQQAKDLQSKYEKKMKMLRDDMELRRKQEIHEIEERKNTHINELMKKHERAFAEIKNYYNDITHNNLDLIKTLKEDVAEMKRREAANEKLMYEIAQDNKKLSEPLSRALKEVELLRQQLANYDKDKLSLAQTKARLLNAERQIKNLEWENEVLSQRFSKVQTERDELYGKFEASIYDVQQKTGLKSALLEKKVEALGEALEMKEAQLAEVLTAANLDPGTLAAINQRLEEVLDNKNQIIKALQYDVAKVSKAHNDLIRVYEAKLTEFGIPVDELGFRPLVTNTSTGPAGLVVGA</sequence>
<feature type="chain" id="PRO_0000306333" description="Dynein regulatory complex subunit 4">
    <location>
        <begin position="1"/>
        <end position="471"/>
    </location>
</feature>
<feature type="region of interest" description="Disordered" evidence="3">
    <location>
        <begin position="1"/>
        <end position="24"/>
    </location>
</feature>
<feature type="coiled-coil region" evidence="2">
    <location>
        <begin position="23"/>
        <end position="239"/>
    </location>
</feature>
<feature type="coiled-coil region" evidence="2">
    <location>
        <begin position="282"/>
        <end position="425"/>
    </location>
</feature>
<feature type="sequence variant" description="In sup-pf3a; reduced swimming speed; defective assembly of N-DRC." evidence="5">
    <location>
        <begin position="96"/>
        <end position="151"/>
    </location>
</feature>
<feature type="sequence variant" description="In sup-pf3b; reduced swimming speed; defective assembly of N-DRC." evidence="5">
    <location>
        <begin position="96"/>
        <end position="127"/>
    </location>
</feature>
<feature type="mutagenesis site" description="Subtle defect in swim velocity." evidence="7">
    <original>D</original>
    <variation>K</variation>
    <location>
        <position position="198"/>
    </location>
</feature>
<evidence type="ECO:0000250" key="1"/>
<evidence type="ECO:0000255" key="2"/>
<evidence type="ECO:0000256" key="3">
    <source>
        <dbReference type="SAM" id="MobiDB-lite"/>
    </source>
</evidence>
<evidence type="ECO:0000269" key="4">
    <source>
    </source>
</evidence>
<evidence type="ECO:0000269" key="5">
    <source>
    </source>
</evidence>
<evidence type="ECO:0000269" key="6">
    <source>
    </source>
</evidence>
<evidence type="ECO:0000269" key="7">
    <source>
    </source>
</evidence>
<evidence type="ECO:0000303" key="8">
    <source>
    </source>
</evidence>
<evidence type="ECO:0000305" key="9"/>
<comment type="function">
    <text evidence="4 5 6">Component of the nexin-dynein regulatory complex (N-DRC), a key regulator of ciliary/flagellar motility which maintains the alignment and integrity of the distal axoneme and regulates microtubule sliding in motile axonemes (PubMed:12847082, PubMed:23427265, PubMed:25411337). Plays an important role in the assembly of the N-DRC linker (PubMed:23427265).</text>
</comment>
<comment type="subunit">
    <text evidence="4 5 6">Component of the nexin-dynein regulatory complex (N-DRC) (PubMed:12847082, PubMed:23427265, PubMed:25411337). Interacts with DRC1, DRC2 and DRC5 (PubMed:23427265).</text>
</comment>
<comment type="subcellular location">
    <subcellularLocation>
        <location evidence="1">Cytoplasm</location>
        <location evidence="1">Cytoskeleton</location>
    </subcellularLocation>
    <subcellularLocation>
        <location evidence="4 5 6 7">Cytoplasm</location>
        <location evidence="4 5 6 7">Cytoskeleton</location>
        <location evidence="4 5 6 7">Flagellum axoneme</location>
    </subcellularLocation>
    <subcellularLocation>
        <location evidence="4 5">Cytoplasm</location>
        <location evidence="4 5">Cytoskeleton</location>
        <location evidence="4 5">Flagellum basal body</location>
    </subcellularLocation>
</comment>
<comment type="disruption phenotype">
    <text evidence="4 5">Defects in DRC4 give the pf2 phenotype characterized by disruption of the assembly of several other N-DRC subunits and an altered waveform that results in slow swimming cells.</text>
</comment>
<comment type="similarity">
    <text evidence="9">Belongs to the DRC4 family.</text>
</comment>
<comment type="sequence caution" evidence="9">
    <conflict type="erroneous gene model prediction">
        <sequence resource="EMBL-CDS" id="EDP00235"/>
    </conflict>
</comment>
<reference key="1">
    <citation type="journal article" date="2003" name="J. Cell Biol.">
        <title>A subunit of the dynein regulatory complex in Chlamydomonas is a homologue of a growth arrest-specific gene product.</title>
        <authorList>
            <person name="Rupp G."/>
            <person name="Porter M.E."/>
        </authorList>
    </citation>
    <scope>NUCLEOTIDE SEQUENCE [GENOMIC DNA]</scope>
    <scope>FUNCTION</scope>
    <scope>SUBUNIT</scope>
    <scope>SUBCELLULAR LOCATION</scope>
    <scope>DISRUPTION PHENOTYPE</scope>
</reference>
<reference key="2">
    <citation type="journal article" date="2007" name="Science">
        <title>The Chlamydomonas genome reveals the evolution of key animal and plant functions.</title>
        <authorList>
            <person name="Merchant S.S."/>
            <person name="Prochnik S.E."/>
            <person name="Vallon O."/>
            <person name="Harris E.H."/>
            <person name="Karpowicz S.J."/>
            <person name="Witman G.B."/>
            <person name="Terry A."/>
            <person name="Salamov A."/>
            <person name="Fritz-Laylin L.K."/>
            <person name="Marechal-Drouard L."/>
            <person name="Marshall W.F."/>
            <person name="Qu L.H."/>
            <person name="Nelson D.R."/>
            <person name="Sanderfoot A.A."/>
            <person name="Spalding M.H."/>
            <person name="Kapitonov V.V."/>
            <person name="Ren Q."/>
            <person name="Ferris P."/>
            <person name="Lindquist E."/>
            <person name="Shapiro H."/>
            <person name="Lucas S.M."/>
            <person name="Grimwood J."/>
            <person name="Schmutz J."/>
            <person name="Cardol P."/>
            <person name="Cerutti H."/>
            <person name="Chanfreau G."/>
            <person name="Chen C.L."/>
            <person name="Cognat V."/>
            <person name="Croft M.T."/>
            <person name="Dent R."/>
            <person name="Dutcher S."/>
            <person name="Fernandez E."/>
            <person name="Fukuzawa H."/>
            <person name="Gonzalez-Ballester D."/>
            <person name="Gonzalez-Halphen D."/>
            <person name="Hallmann A."/>
            <person name="Hanikenne M."/>
            <person name="Hippler M."/>
            <person name="Inwood W."/>
            <person name="Jabbari K."/>
            <person name="Kalanon M."/>
            <person name="Kuras R."/>
            <person name="Lefebvre P.A."/>
            <person name="Lemaire S.D."/>
            <person name="Lobanov A.V."/>
            <person name="Lohr M."/>
            <person name="Manuell A."/>
            <person name="Meier I."/>
            <person name="Mets L."/>
            <person name="Mittag M."/>
            <person name="Mittelmeier T."/>
            <person name="Moroney J.V."/>
            <person name="Moseley J."/>
            <person name="Napoli C."/>
            <person name="Nedelcu A.M."/>
            <person name="Niyogi K."/>
            <person name="Novoselov S.V."/>
            <person name="Paulsen I.T."/>
            <person name="Pazour G.J."/>
            <person name="Purton S."/>
            <person name="Ral J.P."/>
            <person name="Riano-Pachon D.M."/>
            <person name="Riekhof W."/>
            <person name="Rymarquis L."/>
            <person name="Schroda M."/>
            <person name="Stern D."/>
            <person name="Umen J."/>
            <person name="Willows R."/>
            <person name="Wilson N."/>
            <person name="Zimmer S.L."/>
            <person name="Allmer J."/>
            <person name="Balk J."/>
            <person name="Bisova K."/>
            <person name="Chen C.J."/>
            <person name="Elias M."/>
            <person name="Gendler K."/>
            <person name="Hauser C."/>
            <person name="Lamb M.R."/>
            <person name="Ledford H."/>
            <person name="Long J.C."/>
            <person name="Minagawa J."/>
            <person name="Page M.D."/>
            <person name="Pan J."/>
            <person name="Pootakham W."/>
            <person name="Roje S."/>
            <person name="Rose A."/>
            <person name="Stahlberg E."/>
            <person name="Terauchi A.M."/>
            <person name="Yang P."/>
            <person name="Ball S."/>
            <person name="Bowler C."/>
            <person name="Dieckmann C.L."/>
            <person name="Gladyshev V.N."/>
            <person name="Green P."/>
            <person name="Jorgensen R."/>
            <person name="Mayfield S."/>
            <person name="Mueller-Roeber B."/>
            <person name="Rajamani S."/>
            <person name="Sayre R.T."/>
            <person name="Brokstein P."/>
            <person name="Dubchak I."/>
            <person name="Goodstein D."/>
            <person name="Hornick L."/>
            <person name="Huang Y.W."/>
            <person name="Jhaveri J."/>
            <person name="Luo Y."/>
            <person name="Martinez D."/>
            <person name="Ngau W.C."/>
            <person name="Otillar B."/>
            <person name="Poliakov A."/>
            <person name="Porter A."/>
            <person name="Szajkowski L."/>
            <person name="Werner G."/>
            <person name="Zhou K."/>
            <person name="Grigoriev I.V."/>
            <person name="Rokhsar D.S."/>
            <person name="Grossman A.R."/>
        </authorList>
    </citation>
    <scope>NUCLEOTIDE SEQUENCE [LARGE SCALE GENOMIC DNA]</scope>
    <source>
        <strain>CC-503</strain>
    </source>
</reference>
<reference key="3">
    <citation type="journal article" date="2013" name="Mol. Biol. Cell">
        <title>The N-DRC forms a conserved biochemical complex that maintains outer doublet alignment and limits microtubule sliding in motile axonemes.</title>
        <authorList>
            <person name="Bower R."/>
            <person name="Tritschler D."/>
            <person name="Vanderwaal K."/>
            <person name="Perrone C.A."/>
            <person name="Mueller J."/>
            <person name="Fox L."/>
            <person name="Sale W.S."/>
            <person name="Porter M.E."/>
        </authorList>
    </citation>
    <scope>FUNCTION</scope>
    <scope>SUBUNIT</scope>
    <scope>SUBCELLULAR LOCATION</scope>
    <scope>DISRUPTION PHENOTYPE</scope>
    <scope>INTERACTION WITH DRC1; DRC2 AND DRC5</scope>
    <scope>VARIANT SUP-PF3A 96-VAL--GLN-151 DEL</scope>
    <scope>VARIANT SUP-PF3B 96-VAL--GLN-127 DEL</scope>
    <scope>IDENTIFICATION BY MASS SPECTROMETRY</scope>
</reference>
<reference key="4">
    <citation type="journal article" date="2015" name="Mol. Biol. Cell">
        <title>Detailed structural and biochemical characterization of the nexin-dynein regulatory complex.</title>
        <authorList>
            <person name="Oda T."/>
            <person name="Yanagisawa H."/>
            <person name="Kikkawa M."/>
        </authorList>
    </citation>
    <scope>FUNCTION</scope>
    <scope>SUBUNIT</scope>
    <scope>SUBCELLULAR LOCATION</scope>
</reference>
<reference key="5">
    <citation type="journal article" date="2016" name="PLoS Genet.">
        <title>Mutation of growth arrest specific 8 reveals a role in motile cilia function and human disease.</title>
        <authorList>
            <person name="Lewis W.R."/>
            <person name="Malarkey E.B."/>
            <person name="Tritschler D."/>
            <person name="Bower R."/>
            <person name="Pasek R.C."/>
            <person name="Porath J.D."/>
            <person name="Birket S.E."/>
            <person name="Saunier S."/>
            <person name="Antignac C."/>
            <person name="Knowles M.R."/>
            <person name="Leigh M.W."/>
            <person name="Zariwala M.A."/>
            <person name="Challa A.K."/>
            <person name="Kesterson R.A."/>
            <person name="Rowe S.M."/>
            <person name="Drummond I.A."/>
            <person name="Parant J.M."/>
            <person name="Hildebrandt F."/>
            <person name="Porter M.E."/>
            <person name="Yoder B.K."/>
            <person name="Berbari N.F."/>
        </authorList>
    </citation>
    <scope>MUTAGENESIS OF ASP-198</scope>
    <scope>SUBCELLULAR LOCATION</scope>
</reference>
<accession>Q7XJ96</accession>
<accession>A8J6Z3</accession>
<proteinExistence type="evidence at protein level"/>
<keyword id="KW-0002">3D-structure</keyword>
<keyword id="KW-0966">Cell projection</keyword>
<keyword id="KW-0969">Cilium</keyword>
<keyword id="KW-0175">Coiled coil</keyword>
<keyword id="KW-0963">Cytoplasm</keyword>
<keyword id="KW-0206">Cytoskeleton</keyword>
<keyword id="KW-0282">Flagellum</keyword>
<keyword id="KW-0493">Microtubule</keyword>
<dbReference type="EMBL" id="AY309088">
    <property type="protein sequence ID" value="AAP57169.1"/>
    <property type="molecule type" value="Genomic_DNA"/>
</dbReference>
<dbReference type="EMBL" id="AY309087">
    <property type="protein sequence ID" value="AAP57169.1"/>
    <property type="status" value="JOINED"/>
    <property type="molecule type" value="Genomic_DNA"/>
</dbReference>
<dbReference type="EMBL" id="DS496140">
    <property type="protein sequence ID" value="EDP00235.1"/>
    <property type="status" value="ALT_SEQ"/>
    <property type="molecule type" value="Genomic_DNA"/>
</dbReference>
<dbReference type="PDB" id="7JU4">
    <property type="method" value="EM"/>
    <property type="resolution" value="3.40 A"/>
    <property type="chains" value="0/4=1-471"/>
</dbReference>
<dbReference type="PDB" id="8GLV">
    <property type="method" value="EM"/>
    <property type="resolution" value="3.10 A"/>
    <property type="chains" value="EN/EO=1-471"/>
</dbReference>
<dbReference type="PDBsum" id="7JU4"/>
<dbReference type="PDBsum" id="8GLV"/>
<dbReference type="EMDB" id="EMD-22481"/>
<dbReference type="EMDB" id="EMD-40220"/>
<dbReference type="SMR" id="Q7XJ96"/>
<dbReference type="EnsemblPlants" id="PNW76803">
    <property type="protein sequence ID" value="PNW76803"/>
    <property type="gene ID" value="CHLRE_11g476850v5"/>
</dbReference>
<dbReference type="Gramene" id="PNW76803">
    <property type="protein sequence ID" value="PNW76803"/>
    <property type="gene ID" value="CHLRE_11g476850v5"/>
</dbReference>
<dbReference type="eggNOG" id="ENOG502QQDA">
    <property type="taxonomic scope" value="Eukaryota"/>
</dbReference>
<dbReference type="HOGENOM" id="CLU_045343_0_0_1"/>
<dbReference type="OMA" id="MKHLQYE"/>
<dbReference type="OrthoDB" id="767661at2759"/>
<dbReference type="GO" id="GO:0097729">
    <property type="term" value="C:9+2 motile cilium"/>
    <property type="evidence" value="ECO:0000315"/>
    <property type="project" value="GO_Central"/>
</dbReference>
<dbReference type="GO" id="GO:0005930">
    <property type="term" value="C:axoneme"/>
    <property type="evidence" value="ECO:0000314"/>
    <property type="project" value="UniProtKB"/>
</dbReference>
<dbReference type="GO" id="GO:0005874">
    <property type="term" value="C:microtubule"/>
    <property type="evidence" value="ECO:0007669"/>
    <property type="project" value="UniProtKB-KW"/>
</dbReference>
<dbReference type="GO" id="GO:0008017">
    <property type="term" value="F:microtubule binding"/>
    <property type="evidence" value="ECO:0007669"/>
    <property type="project" value="InterPro"/>
</dbReference>
<dbReference type="GO" id="GO:0031267">
    <property type="term" value="F:small GTPase binding"/>
    <property type="evidence" value="ECO:0007669"/>
    <property type="project" value="InterPro"/>
</dbReference>
<dbReference type="GO" id="GO:0070286">
    <property type="term" value="P:axonemal dynein complex assembly"/>
    <property type="evidence" value="ECO:0000315"/>
    <property type="project" value="UniProtKB"/>
</dbReference>
<dbReference type="GO" id="GO:0060294">
    <property type="term" value="P:cilium movement involved in cell motility"/>
    <property type="evidence" value="ECO:0000315"/>
    <property type="project" value="GO_Central"/>
</dbReference>
<dbReference type="InterPro" id="IPR039308">
    <property type="entry name" value="GAS8"/>
</dbReference>
<dbReference type="InterPro" id="IPR025593">
    <property type="entry name" value="GAS8_dom"/>
</dbReference>
<dbReference type="PANTHER" id="PTHR31543">
    <property type="entry name" value="DYNEIN REGULATORY COMPLEX SUBUNIT 4"/>
    <property type="match status" value="1"/>
</dbReference>
<dbReference type="PANTHER" id="PTHR31543:SF0">
    <property type="entry name" value="DYNEIN REGULATORY COMPLEX SUBUNIT 4"/>
    <property type="match status" value="1"/>
</dbReference>
<dbReference type="Pfam" id="PF13851">
    <property type="entry name" value="GAS"/>
    <property type="match status" value="1"/>
</dbReference>
<protein>
    <recommendedName>
        <fullName evidence="8">Dynein regulatory complex subunit 4</fullName>
    </recommendedName>
    <alternativeName>
        <fullName>Growth arrest-specific protein 8 homolog</fullName>
    </alternativeName>
    <alternativeName>
        <fullName>Protein PF2</fullName>
    </alternativeName>
</protein>
<gene>
    <name evidence="8" type="primary">DRC4</name>
    <name type="synonym">GAS8</name>
    <name type="synonym">PF2</name>
</gene>
<name>DRC4_CHLRE</name>
<organism>
    <name type="scientific">Chlamydomonas reinhardtii</name>
    <name type="common">Chlamydomonas smithii</name>
    <dbReference type="NCBI Taxonomy" id="3055"/>
    <lineage>
        <taxon>Eukaryota</taxon>
        <taxon>Viridiplantae</taxon>
        <taxon>Chlorophyta</taxon>
        <taxon>core chlorophytes</taxon>
        <taxon>Chlorophyceae</taxon>
        <taxon>CS clade</taxon>
        <taxon>Chlamydomonadales</taxon>
        <taxon>Chlamydomonadaceae</taxon>
        <taxon>Chlamydomonas</taxon>
    </lineage>
</organism>